<dbReference type="EMBL" id="DS027056">
    <property type="protein sequence ID" value="EAW09435.1"/>
    <property type="molecule type" value="Genomic_DNA"/>
</dbReference>
<dbReference type="RefSeq" id="XP_001270861.1">
    <property type="nucleotide sequence ID" value="XM_001270860.1"/>
</dbReference>
<dbReference type="SMR" id="A1CJW1"/>
<dbReference type="STRING" id="344612.A1CJW1"/>
<dbReference type="EnsemblFungi" id="EAW09435">
    <property type="protein sequence ID" value="EAW09435"/>
    <property type="gene ID" value="ACLA_036390"/>
</dbReference>
<dbReference type="GeneID" id="4703563"/>
<dbReference type="KEGG" id="act:ACLA_036390"/>
<dbReference type="VEuPathDB" id="FungiDB:ACLA_036390"/>
<dbReference type="eggNOG" id="ENOG502SBNA">
    <property type="taxonomic scope" value="Eukaryota"/>
</dbReference>
<dbReference type="HOGENOM" id="CLU_154717_1_1_1"/>
<dbReference type="OMA" id="AMKEDQT"/>
<dbReference type="OrthoDB" id="160405at2759"/>
<dbReference type="Proteomes" id="UP000006701">
    <property type="component" value="Unassembled WGS sequence"/>
</dbReference>
<dbReference type="GO" id="GO:0005789">
    <property type="term" value="C:endoplasmic reticulum membrane"/>
    <property type="evidence" value="ECO:0007669"/>
    <property type="project" value="UniProtKB-SubCell"/>
</dbReference>
<dbReference type="GO" id="GO:0033116">
    <property type="term" value="C:endoplasmic reticulum-Golgi intermediate compartment membrane"/>
    <property type="evidence" value="ECO:0007669"/>
    <property type="project" value="UniProtKB-SubCell"/>
</dbReference>
<dbReference type="GO" id="GO:0012507">
    <property type="term" value="C:ER to Golgi transport vesicle membrane"/>
    <property type="evidence" value="ECO:0007669"/>
    <property type="project" value="UniProtKB-SubCell"/>
</dbReference>
<dbReference type="GO" id="GO:0070072">
    <property type="term" value="P:vacuolar proton-transporting V-type ATPase complex assembly"/>
    <property type="evidence" value="ECO:0007669"/>
    <property type="project" value="UniProtKB-UniRule"/>
</dbReference>
<dbReference type="HAMAP" id="MF_03058">
    <property type="entry name" value="VMA21"/>
    <property type="match status" value="1"/>
</dbReference>
<dbReference type="InterPro" id="IPR019013">
    <property type="entry name" value="Vma21"/>
</dbReference>
<dbReference type="PANTHER" id="PTHR31792">
    <property type="entry name" value="VACUOLAR ATPASE ASSEMBLY INTEGRAL MEMBRANE PROTEIN VMA21"/>
    <property type="match status" value="1"/>
</dbReference>
<dbReference type="PANTHER" id="PTHR31792:SF3">
    <property type="entry name" value="VACUOLAR ATPASE ASSEMBLY INTEGRAL MEMBRANE PROTEIN VMA21"/>
    <property type="match status" value="1"/>
</dbReference>
<dbReference type="Pfam" id="PF09446">
    <property type="entry name" value="VMA21"/>
    <property type="match status" value="1"/>
</dbReference>
<organism>
    <name type="scientific">Aspergillus clavatus (strain ATCC 1007 / CBS 513.65 / DSM 816 / NCTC 3887 / NRRL 1 / QM 1276 / 107)</name>
    <dbReference type="NCBI Taxonomy" id="344612"/>
    <lineage>
        <taxon>Eukaryota</taxon>
        <taxon>Fungi</taxon>
        <taxon>Dikarya</taxon>
        <taxon>Ascomycota</taxon>
        <taxon>Pezizomycotina</taxon>
        <taxon>Eurotiomycetes</taxon>
        <taxon>Eurotiomycetidae</taxon>
        <taxon>Eurotiales</taxon>
        <taxon>Aspergillaceae</taxon>
        <taxon>Aspergillus</taxon>
        <taxon>Aspergillus subgen. Fumigati</taxon>
    </lineage>
</organism>
<gene>
    <name type="primary">vma21</name>
    <name type="ORF">ACLA_036390</name>
</gene>
<feature type="chain" id="PRO_0000377579" description="Vacuolar ATPase assembly integral membrane protein vma21">
    <location>
        <begin position="1"/>
        <end position="107"/>
    </location>
</feature>
<feature type="topological domain" description="Cytoplasmic" evidence="1">
    <location>
        <begin position="1"/>
        <end position="40"/>
    </location>
</feature>
<feature type="transmembrane region" description="Helical" evidence="1">
    <location>
        <begin position="41"/>
        <end position="61"/>
    </location>
</feature>
<feature type="topological domain" description="Lumenal" evidence="1">
    <location>
        <begin position="62"/>
        <end position="68"/>
    </location>
</feature>
<feature type="transmembrane region" description="Helical" evidence="1">
    <location>
        <begin position="69"/>
        <end position="89"/>
    </location>
</feature>
<feature type="topological domain" description="Cytoplasmic" evidence="1">
    <location>
        <begin position="90"/>
        <end position="107"/>
    </location>
</feature>
<feature type="region of interest" description="Disordered" evidence="2">
    <location>
        <begin position="1"/>
        <end position="29"/>
    </location>
</feature>
<feature type="short sequence motif" description="Prevents secretion from ER">
    <location>
        <begin position="104"/>
        <end position="107"/>
    </location>
</feature>
<feature type="compositionally biased region" description="Basic and acidic residues" evidence="2">
    <location>
        <begin position="1"/>
        <end position="11"/>
    </location>
</feature>
<reference key="1">
    <citation type="journal article" date="2008" name="PLoS Genet.">
        <title>Genomic islands in the pathogenic filamentous fungus Aspergillus fumigatus.</title>
        <authorList>
            <person name="Fedorova N.D."/>
            <person name="Khaldi N."/>
            <person name="Joardar V.S."/>
            <person name="Maiti R."/>
            <person name="Amedeo P."/>
            <person name="Anderson M.J."/>
            <person name="Crabtree J."/>
            <person name="Silva J.C."/>
            <person name="Badger J.H."/>
            <person name="Albarraq A."/>
            <person name="Angiuoli S."/>
            <person name="Bussey H."/>
            <person name="Bowyer P."/>
            <person name="Cotty P.J."/>
            <person name="Dyer P.S."/>
            <person name="Egan A."/>
            <person name="Galens K."/>
            <person name="Fraser-Liggett C.M."/>
            <person name="Haas B.J."/>
            <person name="Inman J.M."/>
            <person name="Kent R."/>
            <person name="Lemieux S."/>
            <person name="Malavazi I."/>
            <person name="Orvis J."/>
            <person name="Roemer T."/>
            <person name="Ronning C.M."/>
            <person name="Sundaram J.P."/>
            <person name="Sutton G."/>
            <person name="Turner G."/>
            <person name="Venter J.C."/>
            <person name="White O.R."/>
            <person name="Whitty B.R."/>
            <person name="Youngman P."/>
            <person name="Wolfe K.H."/>
            <person name="Goldman G.H."/>
            <person name="Wortman J.R."/>
            <person name="Jiang B."/>
            <person name="Denning D.W."/>
            <person name="Nierman W.C."/>
        </authorList>
    </citation>
    <scope>NUCLEOTIDE SEQUENCE [LARGE SCALE GENOMIC DNA]</scope>
    <source>
        <strain>ATCC 1007 / CBS 513.65 / DSM 816 / NCTC 3887 / NRRL 1 / QM 1276 / 107</strain>
    </source>
</reference>
<evidence type="ECO:0000255" key="1">
    <source>
        <dbReference type="HAMAP-Rule" id="MF_03058"/>
    </source>
</evidence>
<evidence type="ECO:0000256" key="2">
    <source>
        <dbReference type="SAM" id="MobiDB-lite"/>
    </source>
</evidence>
<keyword id="KW-0968">Cytoplasmic vesicle</keyword>
<keyword id="KW-0256">Endoplasmic reticulum</keyword>
<keyword id="KW-0472">Membrane</keyword>
<keyword id="KW-1185">Reference proteome</keyword>
<keyword id="KW-0812">Transmembrane</keyword>
<keyword id="KW-1133">Transmembrane helix</keyword>
<comment type="function">
    <text evidence="1">Required for the assembly of the V0 complex of the vacuolar ATPase (V-ATPase) in the endoplasmic reticulum.</text>
</comment>
<comment type="subcellular location">
    <subcellularLocation>
        <location evidence="1">Endoplasmic reticulum membrane</location>
        <topology evidence="1">Multi-pass membrane protein</topology>
    </subcellularLocation>
    <subcellularLocation>
        <location evidence="1">Endoplasmic reticulum-Golgi intermediate compartment membrane</location>
        <topology evidence="1">Multi-pass membrane protein</topology>
    </subcellularLocation>
    <subcellularLocation>
        <location evidence="1">Cytoplasmic vesicle</location>
        <location evidence="1">COPII-coated vesicle membrane</location>
        <topology evidence="1">Multi-pass membrane protein</topology>
    </subcellularLocation>
</comment>
<comment type="similarity">
    <text evidence="1">Belongs to the VMA21 family.</text>
</comment>
<sequence>MAGRHSQEKSYAEAAAAPAPEKPDSSDVTPAVPADVIYKLLGFTAAMIVGPIGMYFVTVDFGASSTVAGVTAAVTANVILFTYIYVAWLEDKEDREVAAKRKEKKAQ</sequence>
<name>VMA21_ASPCL</name>
<protein>
    <recommendedName>
        <fullName evidence="1">Vacuolar ATPase assembly integral membrane protein vma21</fullName>
    </recommendedName>
</protein>
<proteinExistence type="inferred from homology"/>
<accession>A1CJW1</accession>